<dbReference type="EC" id="4.2.1.136" evidence="1"/>
<dbReference type="EMBL" id="CP000253">
    <property type="protein sequence ID" value="ABD29198.1"/>
    <property type="status" value="ALT_INIT"/>
    <property type="molecule type" value="Genomic_DNA"/>
</dbReference>
<dbReference type="RefSeq" id="WP_001801620.1">
    <property type="nucleotide sequence ID" value="NC_007795.1"/>
</dbReference>
<dbReference type="RefSeq" id="YP_498615.1">
    <property type="nucleotide sequence ID" value="NC_007795.1"/>
</dbReference>
<dbReference type="SMR" id="Q2G2P8"/>
<dbReference type="STRING" id="93061.SAOUHSC_00007"/>
<dbReference type="PaxDb" id="1280-SAXN108_0009"/>
<dbReference type="GeneID" id="3919180"/>
<dbReference type="KEGG" id="sao:SAOUHSC_00007"/>
<dbReference type="PATRIC" id="fig|93061.5.peg.7"/>
<dbReference type="eggNOG" id="COG0063">
    <property type="taxonomic scope" value="Bacteria"/>
</dbReference>
<dbReference type="HOGENOM" id="CLU_024853_2_1_9"/>
<dbReference type="OrthoDB" id="9806925at2"/>
<dbReference type="Proteomes" id="UP000008816">
    <property type="component" value="Chromosome"/>
</dbReference>
<dbReference type="GO" id="GO:0052855">
    <property type="term" value="F:ADP-dependent NAD(P)H-hydrate dehydratase activity"/>
    <property type="evidence" value="ECO:0000318"/>
    <property type="project" value="GO_Central"/>
</dbReference>
<dbReference type="GO" id="GO:0005524">
    <property type="term" value="F:ATP binding"/>
    <property type="evidence" value="ECO:0007669"/>
    <property type="project" value="UniProtKB-KW"/>
</dbReference>
<dbReference type="GO" id="GO:0052856">
    <property type="term" value="F:NAD(P)HX epimerase activity"/>
    <property type="evidence" value="ECO:0000318"/>
    <property type="project" value="GO_Central"/>
</dbReference>
<dbReference type="GO" id="GO:0110051">
    <property type="term" value="P:metabolite repair"/>
    <property type="evidence" value="ECO:0000318"/>
    <property type="project" value="GO_Central"/>
</dbReference>
<dbReference type="GO" id="GO:0046496">
    <property type="term" value="P:nicotinamide nucleotide metabolic process"/>
    <property type="evidence" value="ECO:0007669"/>
    <property type="project" value="UniProtKB-UniRule"/>
</dbReference>
<dbReference type="CDD" id="cd01171">
    <property type="entry name" value="YXKO-related"/>
    <property type="match status" value="1"/>
</dbReference>
<dbReference type="Gene3D" id="3.40.1190.20">
    <property type="match status" value="1"/>
</dbReference>
<dbReference type="HAMAP" id="MF_01965">
    <property type="entry name" value="NADHX_dehydratase"/>
    <property type="match status" value="1"/>
</dbReference>
<dbReference type="InterPro" id="IPR017953">
    <property type="entry name" value="Carbohydrate_kinase_pred_CS"/>
</dbReference>
<dbReference type="InterPro" id="IPR000631">
    <property type="entry name" value="CARKD"/>
</dbReference>
<dbReference type="InterPro" id="IPR029056">
    <property type="entry name" value="Ribokinase-like"/>
</dbReference>
<dbReference type="NCBIfam" id="TIGR00196">
    <property type="entry name" value="yjeF_cterm"/>
    <property type="match status" value="1"/>
</dbReference>
<dbReference type="PANTHER" id="PTHR12592:SF0">
    <property type="entry name" value="ATP-DEPENDENT (S)-NAD(P)H-HYDRATE DEHYDRATASE"/>
    <property type="match status" value="1"/>
</dbReference>
<dbReference type="PANTHER" id="PTHR12592">
    <property type="entry name" value="ATP-DEPENDENT (S)-NAD(P)H-HYDRATE DEHYDRATASE FAMILY MEMBER"/>
    <property type="match status" value="1"/>
</dbReference>
<dbReference type="Pfam" id="PF01256">
    <property type="entry name" value="Carb_kinase"/>
    <property type="match status" value="1"/>
</dbReference>
<dbReference type="SUPFAM" id="SSF53613">
    <property type="entry name" value="Ribokinase-like"/>
    <property type="match status" value="1"/>
</dbReference>
<dbReference type="PROSITE" id="PS01049">
    <property type="entry name" value="YJEF_C_1"/>
    <property type="match status" value="1"/>
</dbReference>
<dbReference type="PROSITE" id="PS01050">
    <property type="entry name" value="YJEF_C_2"/>
    <property type="match status" value="1"/>
</dbReference>
<dbReference type="PROSITE" id="PS51383">
    <property type="entry name" value="YJEF_C_3"/>
    <property type="match status" value="1"/>
</dbReference>
<name>NNRD_STAA8</name>
<sequence>MGGYITMETLNSINIPKRKEDSHKGDYGKILLIGGSANLGGAIMLAARACVFSGSGLITVATHPTNHSALHSRCPEAMVIDINDTKMLTKMIEMTDSILIGPGLGVDFKGNNAITFLLQNIQPHQNLIVDGDAITIFSKLKPQLPTCRVIFTPHLKEWERLSGIPIEEQTYERNREAVDRLGATVVLKKHGTEIFFKDEDFKLTIGSPAMATGGMGDTLAGMITSFVGQFDNLKEAVMSATYTHSFIGENLAKDMYVVPPSRLINEIPYAMKQLES</sequence>
<protein>
    <recommendedName>
        <fullName evidence="1">ADP-dependent (S)-NAD(P)H-hydrate dehydratase</fullName>
        <ecNumber evidence="1">4.2.1.136</ecNumber>
    </recommendedName>
    <alternativeName>
        <fullName evidence="1">ADP-dependent NAD(P)HX dehydratase</fullName>
    </alternativeName>
</protein>
<reference key="1">
    <citation type="book" date="2006" name="Gram positive pathogens, 2nd edition">
        <title>The Staphylococcus aureus NCTC 8325 genome.</title>
        <editorList>
            <person name="Fischetti V."/>
            <person name="Novick R."/>
            <person name="Ferretti J."/>
            <person name="Portnoy D."/>
            <person name="Rood J."/>
        </editorList>
        <authorList>
            <person name="Gillaspy A.F."/>
            <person name="Worrell V."/>
            <person name="Orvis J."/>
            <person name="Roe B.A."/>
            <person name="Dyer D.W."/>
            <person name="Iandolo J.J."/>
        </authorList>
    </citation>
    <scope>NUCLEOTIDE SEQUENCE [LARGE SCALE GENOMIC DNA]</scope>
    <source>
        <strain>NCTC 8325 / PS 47</strain>
    </source>
</reference>
<evidence type="ECO:0000255" key="1">
    <source>
        <dbReference type="HAMAP-Rule" id="MF_01965"/>
    </source>
</evidence>
<evidence type="ECO:0000305" key="2"/>
<keyword id="KW-0067">ATP-binding</keyword>
<keyword id="KW-0456">Lyase</keyword>
<keyword id="KW-0520">NAD</keyword>
<keyword id="KW-0521">NADP</keyword>
<keyword id="KW-0547">Nucleotide-binding</keyword>
<keyword id="KW-1185">Reference proteome</keyword>
<proteinExistence type="inferred from homology"/>
<gene>
    <name evidence="1" type="primary">nnrD</name>
    <name type="ordered locus">SAOUHSC_00007</name>
</gene>
<organism>
    <name type="scientific">Staphylococcus aureus (strain NCTC 8325 / PS 47)</name>
    <dbReference type="NCBI Taxonomy" id="93061"/>
    <lineage>
        <taxon>Bacteria</taxon>
        <taxon>Bacillati</taxon>
        <taxon>Bacillota</taxon>
        <taxon>Bacilli</taxon>
        <taxon>Bacillales</taxon>
        <taxon>Staphylococcaceae</taxon>
        <taxon>Staphylococcus</taxon>
    </lineage>
</organism>
<feature type="chain" id="PRO_0000416149" description="ADP-dependent (S)-NAD(P)H-hydrate dehydratase">
    <location>
        <begin position="1"/>
        <end position="276"/>
    </location>
</feature>
<feature type="domain" description="YjeF C-terminal" evidence="1">
    <location>
        <begin position="7"/>
        <end position="274"/>
    </location>
</feature>
<feature type="binding site" evidence="1">
    <location>
        <position position="42"/>
    </location>
    <ligand>
        <name>(6S)-NADPHX</name>
        <dbReference type="ChEBI" id="CHEBI:64076"/>
    </ligand>
</feature>
<feature type="binding site" evidence="1">
    <location>
        <position position="105"/>
    </location>
    <ligand>
        <name>(6S)-NADPHX</name>
        <dbReference type="ChEBI" id="CHEBI:64076"/>
    </ligand>
</feature>
<feature type="binding site" evidence="1">
    <location>
        <position position="154"/>
    </location>
    <ligand>
        <name>(6S)-NADPHX</name>
        <dbReference type="ChEBI" id="CHEBI:64076"/>
    </ligand>
</feature>
<feature type="binding site" evidence="1">
    <location>
        <position position="216"/>
    </location>
    <ligand>
        <name>AMP</name>
        <dbReference type="ChEBI" id="CHEBI:456215"/>
    </ligand>
</feature>
<feature type="binding site" evidence="1">
    <location>
        <position position="217"/>
    </location>
    <ligand>
        <name>(6S)-NADPHX</name>
        <dbReference type="ChEBI" id="CHEBI:64076"/>
    </ligand>
</feature>
<accession>Q2G2P8</accession>
<comment type="function">
    <text evidence="1">Catalyzes the dehydration of the S-form of NAD(P)HX at the expense of ADP, which is converted to AMP. Together with NAD(P)HX epimerase, which catalyzes the epimerization of the S- and R-forms, the enzyme allows the repair of both epimers of NAD(P)HX, a damaged form of NAD(P)H that is a result of enzymatic or heat-dependent hydration.</text>
</comment>
<comment type="catalytic activity">
    <reaction evidence="1">
        <text>(6S)-NADHX + ADP = AMP + phosphate + NADH + H(+)</text>
        <dbReference type="Rhea" id="RHEA:32223"/>
        <dbReference type="ChEBI" id="CHEBI:15378"/>
        <dbReference type="ChEBI" id="CHEBI:43474"/>
        <dbReference type="ChEBI" id="CHEBI:57945"/>
        <dbReference type="ChEBI" id="CHEBI:64074"/>
        <dbReference type="ChEBI" id="CHEBI:456215"/>
        <dbReference type="ChEBI" id="CHEBI:456216"/>
        <dbReference type="EC" id="4.2.1.136"/>
    </reaction>
</comment>
<comment type="catalytic activity">
    <reaction evidence="1">
        <text>(6S)-NADPHX + ADP = AMP + phosphate + NADPH + H(+)</text>
        <dbReference type="Rhea" id="RHEA:32235"/>
        <dbReference type="ChEBI" id="CHEBI:15378"/>
        <dbReference type="ChEBI" id="CHEBI:43474"/>
        <dbReference type="ChEBI" id="CHEBI:57783"/>
        <dbReference type="ChEBI" id="CHEBI:64076"/>
        <dbReference type="ChEBI" id="CHEBI:456215"/>
        <dbReference type="ChEBI" id="CHEBI:456216"/>
        <dbReference type="EC" id="4.2.1.136"/>
    </reaction>
</comment>
<comment type="cofactor">
    <cofactor evidence="1">
        <name>Mg(2+)</name>
        <dbReference type="ChEBI" id="CHEBI:18420"/>
    </cofactor>
</comment>
<comment type="subunit">
    <text evidence="1">Homotetramer.</text>
</comment>
<comment type="similarity">
    <text evidence="1">Belongs to the NnrD/CARKD family.</text>
</comment>
<comment type="sequence caution" evidence="2">
    <conflict type="erroneous initiation">
        <sequence resource="EMBL-CDS" id="ABD29198"/>
    </conflict>
    <text>Truncated N-terminus.</text>
</comment>